<gene>
    <name evidence="1" type="primary">rplK</name>
    <name type="ordered locus">Abu_1888</name>
</gene>
<accession>A8EVZ8</accession>
<protein>
    <recommendedName>
        <fullName evidence="1">Large ribosomal subunit protein uL11</fullName>
    </recommendedName>
    <alternativeName>
        <fullName evidence="2">50S ribosomal protein L11</fullName>
    </alternativeName>
</protein>
<proteinExistence type="inferred from homology"/>
<keyword id="KW-0488">Methylation</keyword>
<keyword id="KW-1185">Reference proteome</keyword>
<keyword id="KW-0687">Ribonucleoprotein</keyword>
<keyword id="KW-0689">Ribosomal protein</keyword>
<keyword id="KW-0694">RNA-binding</keyword>
<keyword id="KW-0699">rRNA-binding</keyword>
<sequence>MAKKIQGFLKLQIPAGAANPSPPVGPALGQRGVNIMEFCKAFNEKTKDKAGYRIPVVLTIYTDKSFTFELKQPPMTELIKKISGVKKGSDNPLKNKVGKLSKAQIMEIVDMKIKDLNTDDREVAAKIVAGSARSIGIETEL</sequence>
<dbReference type="EMBL" id="CP000361">
    <property type="protein sequence ID" value="ABV68121.1"/>
    <property type="molecule type" value="Genomic_DNA"/>
</dbReference>
<dbReference type="RefSeq" id="WP_004511258.1">
    <property type="nucleotide sequence ID" value="NC_009850.1"/>
</dbReference>
<dbReference type="SMR" id="A8EVZ8"/>
<dbReference type="STRING" id="367737.Abu_1888"/>
<dbReference type="GeneID" id="24304384"/>
<dbReference type="KEGG" id="abu:Abu_1888"/>
<dbReference type="eggNOG" id="COG0080">
    <property type="taxonomic scope" value="Bacteria"/>
</dbReference>
<dbReference type="HOGENOM" id="CLU_074237_2_0_7"/>
<dbReference type="Proteomes" id="UP000001136">
    <property type="component" value="Chromosome"/>
</dbReference>
<dbReference type="GO" id="GO:0022625">
    <property type="term" value="C:cytosolic large ribosomal subunit"/>
    <property type="evidence" value="ECO:0007669"/>
    <property type="project" value="TreeGrafter"/>
</dbReference>
<dbReference type="GO" id="GO:0070180">
    <property type="term" value="F:large ribosomal subunit rRNA binding"/>
    <property type="evidence" value="ECO:0007669"/>
    <property type="project" value="UniProtKB-UniRule"/>
</dbReference>
<dbReference type="GO" id="GO:0003735">
    <property type="term" value="F:structural constituent of ribosome"/>
    <property type="evidence" value="ECO:0007669"/>
    <property type="project" value="InterPro"/>
</dbReference>
<dbReference type="GO" id="GO:0006412">
    <property type="term" value="P:translation"/>
    <property type="evidence" value="ECO:0007669"/>
    <property type="project" value="UniProtKB-UniRule"/>
</dbReference>
<dbReference type="CDD" id="cd00349">
    <property type="entry name" value="Ribosomal_L11"/>
    <property type="match status" value="1"/>
</dbReference>
<dbReference type="FunFam" id="3.30.1550.10:FF:000001">
    <property type="entry name" value="50S ribosomal protein L11"/>
    <property type="match status" value="1"/>
</dbReference>
<dbReference type="Gene3D" id="1.10.10.250">
    <property type="entry name" value="Ribosomal protein L11, C-terminal domain"/>
    <property type="match status" value="1"/>
</dbReference>
<dbReference type="Gene3D" id="3.30.1550.10">
    <property type="entry name" value="Ribosomal protein L11/L12, N-terminal domain"/>
    <property type="match status" value="1"/>
</dbReference>
<dbReference type="HAMAP" id="MF_00736">
    <property type="entry name" value="Ribosomal_uL11"/>
    <property type="match status" value="1"/>
</dbReference>
<dbReference type="InterPro" id="IPR000911">
    <property type="entry name" value="Ribosomal_uL11"/>
</dbReference>
<dbReference type="InterPro" id="IPR006519">
    <property type="entry name" value="Ribosomal_uL11_bac-typ"/>
</dbReference>
<dbReference type="InterPro" id="IPR020783">
    <property type="entry name" value="Ribosomal_uL11_C"/>
</dbReference>
<dbReference type="InterPro" id="IPR036769">
    <property type="entry name" value="Ribosomal_uL11_C_sf"/>
</dbReference>
<dbReference type="InterPro" id="IPR020784">
    <property type="entry name" value="Ribosomal_uL11_N"/>
</dbReference>
<dbReference type="InterPro" id="IPR036796">
    <property type="entry name" value="Ribosomal_uL11_N_sf"/>
</dbReference>
<dbReference type="NCBIfam" id="TIGR01632">
    <property type="entry name" value="L11_bact"/>
    <property type="match status" value="1"/>
</dbReference>
<dbReference type="PANTHER" id="PTHR11661">
    <property type="entry name" value="60S RIBOSOMAL PROTEIN L12"/>
    <property type="match status" value="1"/>
</dbReference>
<dbReference type="PANTHER" id="PTHR11661:SF1">
    <property type="entry name" value="LARGE RIBOSOMAL SUBUNIT PROTEIN UL11M"/>
    <property type="match status" value="1"/>
</dbReference>
<dbReference type="Pfam" id="PF00298">
    <property type="entry name" value="Ribosomal_L11"/>
    <property type="match status" value="1"/>
</dbReference>
<dbReference type="Pfam" id="PF03946">
    <property type="entry name" value="Ribosomal_L11_N"/>
    <property type="match status" value="1"/>
</dbReference>
<dbReference type="SMART" id="SM00649">
    <property type="entry name" value="RL11"/>
    <property type="match status" value="1"/>
</dbReference>
<dbReference type="SUPFAM" id="SSF54747">
    <property type="entry name" value="Ribosomal L11/L12e N-terminal domain"/>
    <property type="match status" value="1"/>
</dbReference>
<dbReference type="SUPFAM" id="SSF46906">
    <property type="entry name" value="Ribosomal protein L11, C-terminal domain"/>
    <property type="match status" value="1"/>
</dbReference>
<organism>
    <name type="scientific">Aliarcobacter butzleri (strain RM4018)</name>
    <name type="common">Arcobacter butzleri</name>
    <dbReference type="NCBI Taxonomy" id="367737"/>
    <lineage>
        <taxon>Bacteria</taxon>
        <taxon>Pseudomonadati</taxon>
        <taxon>Campylobacterota</taxon>
        <taxon>Epsilonproteobacteria</taxon>
        <taxon>Campylobacterales</taxon>
        <taxon>Arcobacteraceae</taxon>
        <taxon>Aliarcobacter</taxon>
    </lineage>
</organism>
<comment type="function">
    <text evidence="1">Forms part of the ribosomal stalk which helps the ribosome interact with GTP-bound translation factors.</text>
</comment>
<comment type="subunit">
    <text evidence="1">Part of the ribosomal stalk of the 50S ribosomal subunit. Interacts with L10 and the large rRNA to form the base of the stalk. L10 forms an elongated spine to which L12 dimers bind in a sequential fashion forming a multimeric L10(L12)X complex.</text>
</comment>
<comment type="PTM">
    <text evidence="1">One or more lysine residues are methylated.</text>
</comment>
<comment type="similarity">
    <text evidence="1">Belongs to the universal ribosomal protein uL11 family.</text>
</comment>
<evidence type="ECO:0000255" key="1">
    <source>
        <dbReference type="HAMAP-Rule" id="MF_00736"/>
    </source>
</evidence>
<evidence type="ECO:0000305" key="2"/>
<name>RL11_ALIB4</name>
<reference key="1">
    <citation type="journal article" date="2007" name="PLoS ONE">
        <title>The complete genome sequence and analysis of the Epsilonproteobacterium Arcobacter butzleri.</title>
        <authorList>
            <person name="Miller W.G."/>
            <person name="Parker C.T."/>
            <person name="Rubenfield M."/>
            <person name="Mendz G.L."/>
            <person name="Woesten M.M.S.M."/>
            <person name="Ussery D.W."/>
            <person name="Stolz J.F."/>
            <person name="Binnewies T.T."/>
            <person name="Hallin P.F."/>
            <person name="Wang G."/>
            <person name="Malek J.A."/>
            <person name="Rogosin A."/>
            <person name="Stanker L.H."/>
            <person name="Mandrell R.E."/>
        </authorList>
    </citation>
    <scope>NUCLEOTIDE SEQUENCE [LARGE SCALE GENOMIC DNA]</scope>
    <source>
        <strain>RM4018</strain>
    </source>
</reference>
<feature type="chain" id="PRO_1000062133" description="Large ribosomal subunit protein uL11">
    <location>
        <begin position="1"/>
        <end position="141"/>
    </location>
</feature>